<feature type="chain" id="PRO_0000104389" description="Large ribosomal subunit protein uL11">
    <location>
        <begin position="1"/>
        <end position="144"/>
    </location>
</feature>
<gene>
    <name evidence="1" type="primary">rplK</name>
</gene>
<dbReference type="EMBL" id="D14451">
    <property type="protein sequence ID" value="BAA03346.1"/>
    <property type="molecule type" value="Genomic_DNA"/>
</dbReference>
<dbReference type="PIR" id="S40772">
    <property type="entry name" value="S40772"/>
</dbReference>
<dbReference type="SMR" id="Q07975"/>
<dbReference type="GO" id="GO:0022625">
    <property type="term" value="C:cytosolic large ribosomal subunit"/>
    <property type="evidence" value="ECO:0007669"/>
    <property type="project" value="TreeGrafter"/>
</dbReference>
<dbReference type="GO" id="GO:0070180">
    <property type="term" value="F:large ribosomal subunit rRNA binding"/>
    <property type="evidence" value="ECO:0007669"/>
    <property type="project" value="UniProtKB-UniRule"/>
</dbReference>
<dbReference type="GO" id="GO:0003735">
    <property type="term" value="F:structural constituent of ribosome"/>
    <property type="evidence" value="ECO:0007669"/>
    <property type="project" value="InterPro"/>
</dbReference>
<dbReference type="GO" id="GO:0006412">
    <property type="term" value="P:translation"/>
    <property type="evidence" value="ECO:0007669"/>
    <property type="project" value="UniProtKB-UniRule"/>
</dbReference>
<dbReference type="CDD" id="cd00349">
    <property type="entry name" value="Ribosomal_L11"/>
    <property type="match status" value="1"/>
</dbReference>
<dbReference type="FunFam" id="1.10.10.250:FF:000001">
    <property type="entry name" value="50S ribosomal protein L11"/>
    <property type="match status" value="1"/>
</dbReference>
<dbReference type="FunFam" id="3.30.1550.10:FF:000001">
    <property type="entry name" value="50S ribosomal protein L11"/>
    <property type="match status" value="1"/>
</dbReference>
<dbReference type="Gene3D" id="1.10.10.250">
    <property type="entry name" value="Ribosomal protein L11, C-terminal domain"/>
    <property type="match status" value="1"/>
</dbReference>
<dbReference type="Gene3D" id="3.30.1550.10">
    <property type="entry name" value="Ribosomal protein L11/L12, N-terminal domain"/>
    <property type="match status" value="1"/>
</dbReference>
<dbReference type="HAMAP" id="MF_00736">
    <property type="entry name" value="Ribosomal_uL11"/>
    <property type="match status" value="1"/>
</dbReference>
<dbReference type="InterPro" id="IPR000911">
    <property type="entry name" value="Ribosomal_uL11"/>
</dbReference>
<dbReference type="InterPro" id="IPR006519">
    <property type="entry name" value="Ribosomal_uL11_bac-typ"/>
</dbReference>
<dbReference type="InterPro" id="IPR020783">
    <property type="entry name" value="Ribosomal_uL11_C"/>
</dbReference>
<dbReference type="InterPro" id="IPR036769">
    <property type="entry name" value="Ribosomal_uL11_C_sf"/>
</dbReference>
<dbReference type="InterPro" id="IPR020785">
    <property type="entry name" value="Ribosomal_uL11_CS"/>
</dbReference>
<dbReference type="InterPro" id="IPR020784">
    <property type="entry name" value="Ribosomal_uL11_N"/>
</dbReference>
<dbReference type="InterPro" id="IPR036796">
    <property type="entry name" value="Ribosomal_uL11_N_sf"/>
</dbReference>
<dbReference type="NCBIfam" id="TIGR01632">
    <property type="entry name" value="L11_bact"/>
    <property type="match status" value="1"/>
</dbReference>
<dbReference type="PANTHER" id="PTHR11661">
    <property type="entry name" value="60S RIBOSOMAL PROTEIN L12"/>
    <property type="match status" value="1"/>
</dbReference>
<dbReference type="PANTHER" id="PTHR11661:SF1">
    <property type="entry name" value="LARGE RIBOSOMAL SUBUNIT PROTEIN UL11M"/>
    <property type="match status" value="1"/>
</dbReference>
<dbReference type="Pfam" id="PF00298">
    <property type="entry name" value="Ribosomal_L11"/>
    <property type="match status" value="1"/>
</dbReference>
<dbReference type="Pfam" id="PF03946">
    <property type="entry name" value="Ribosomal_L11_N"/>
    <property type="match status" value="1"/>
</dbReference>
<dbReference type="SMART" id="SM00649">
    <property type="entry name" value="RL11"/>
    <property type="match status" value="1"/>
</dbReference>
<dbReference type="SUPFAM" id="SSF54747">
    <property type="entry name" value="Ribosomal L11/L12e N-terminal domain"/>
    <property type="match status" value="1"/>
</dbReference>
<dbReference type="SUPFAM" id="SSF46906">
    <property type="entry name" value="Ribosomal protein L11, C-terminal domain"/>
    <property type="match status" value="1"/>
</dbReference>
<dbReference type="PROSITE" id="PS00359">
    <property type="entry name" value="RIBOSOMAL_L11"/>
    <property type="match status" value="1"/>
</dbReference>
<sequence length="144" mass="15328">MPPKKKKVTGLIKLQIKAGAANPAPPVGPALGQHGVNIMEFCKAYNAATESQRGMVVPVEITVYEDRSFTFVTKTPPAARLILKHAGIEKGSGEPHKTKVANVTRDQVREIATIKMPDLNANDLDAAEKIIAGTARSMGVTVEG</sequence>
<comment type="function">
    <text evidence="1">Forms part of the ribosomal stalk which helps the ribosome interact with GTP-bound translation factors.</text>
</comment>
<comment type="subunit">
    <text evidence="1">Part of the ribosomal stalk of the 50S ribosomal subunit. Interacts with L10 and the large rRNA to form the base of the stalk. L10 forms an elongated spine to which L12 dimers bind in a sequential fashion forming a multimeric L10(L12)X complex.</text>
</comment>
<comment type="PTM">
    <text evidence="1">One or more lysine residues are methylated.</text>
</comment>
<comment type="similarity">
    <text evidence="1">Belongs to the universal ribosomal protein uL11 family.</text>
</comment>
<name>RL11_STRSF</name>
<reference key="1">
    <citation type="journal article" date="1993" name="Nucleic Acids Res.">
        <title>Nucleotide sequence of the genes encoding L11 and L1 equivalent ribosomal protein from Streptomyces sp. FRI-5.</title>
        <authorList>
            <person name="Ruengjitchatchawalya M."/>
            <person name="Okamoto S."/>
            <person name="Nihira T."/>
            <person name="Yamada M."/>
        </authorList>
    </citation>
    <scope>NUCLEOTIDE SEQUENCE [GENOMIC DNA]</scope>
</reference>
<protein>
    <recommendedName>
        <fullName evidence="1">Large ribosomal subunit protein uL11</fullName>
    </recommendedName>
    <alternativeName>
        <fullName evidence="2">50S ribosomal protein L11</fullName>
    </alternativeName>
</protein>
<proteinExistence type="inferred from homology"/>
<accession>Q07975</accession>
<organism>
    <name type="scientific">Streptomyces sp. (strain FRI-5)</name>
    <dbReference type="NCBI Taxonomy" id="74574"/>
    <lineage>
        <taxon>Bacteria</taxon>
        <taxon>Bacillati</taxon>
        <taxon>Actinomycetota</taxon>
        <taxon>Actinomycetes</taxon>
        <taxon>Kitasatosporales</taxon>
        <taxon>Streptomycetaceae</taxon>
        <taxon>Streptomyces</taxon>
    </lineage>
</organism>
<evidence type="ECO:0000255" key="1">
    <source>
        <dbReference type="HAMAP-Rule" id="MF_00736"/>
    </source>
</evidence>
<evidence type="ECO:0000305" key="2"/>
<keyword id="KW-0488">Methylation</keyword>
<keyword id="KW-0687">Ribonucleoprotein</keyword>
<keyword id="KW-0689">Ribosomal protein</keyword>
<keyword id="KW-0694">RNA-binding</keyword>
<keyword id="KW-0699">rRNA-binding</keyword>